<protein>
    <recommendedName>
        <fullName evidence="1">Probable protein kinase UbiB</fullName>
        <ecNumber evidence="1">2.7.-.-</ecNumber>
    </recommendedName>
    <alternativeName>
        <fullName evidence="1">Ubiquinone biosynthesis protein UbiB</fullName>
    </alternativeName>
</protein>
<gene>
    <name evidence="1" type="primary">ubiB</name>
    <name type="ordered locus">Pfl01_0385</name>
</gene>
<dbReference type="EC" id="2.7.-.-" evidence="1"/>
<dbReference type="EMBL" id="CP000094">
    <property type="protein sequence ID" value="ABA72129.1"/>
    <property type="molecule type" value="Genomic_DNA"/>
</dbReference>
<dbReference type="RefSeq" id="WP_011332063.1">
    <property type="nucleotide sequence ID" value="NC_007492.2"/>
</dbReference>
<dbReference type="SMR" id="Q3KJC7"/>
<dbReference type="KEGG" id="pfo:Pfl01_0385"/>
<dbReference type="eggNOG" id="COG0661">
    <property type="taxonomic scope" value="Bacteria"/>
</dbReference>
<dbReference type="HOGENOM" id="CLU_006533_0_0_6"/>
<dbReference type="UniPathway" id="UPA00232"/>
<dbReference type="Proteomes" id="UP000002704">
    <property type="component" value="Chromosome"/>
</dbReference>
<dbReference type="GO" id="GO:0005886">
    <property type="term" value="C:plasma membrane"/>
    <property type="evidence" value="ECO:0007669"/>
    <property type="project" value="UniProtKB-SubCell"/>
</dbReference>
<dbReference type="GO" id="GO:0005524">
    <property type="term" value="F:ATP binding"/>
    <property type="evidence" value="ECO:0007669"/>
    <property type="project" value="UniProtKB-KW"/>
</dbReference>
<dbReference type="GO" id="GO:0004672">
    <property type="term" value="F:protein kinase activity"/>
    <property type="evidence" value="ECO:0007669"/>
    <property type="project" value="UniProtKB-UniRule"/>
</dbReference>
<dbReference type="GO" id="GO:0010795">
    <property type="term" value="P:regulation of ubiquinone biosynthetic process"/>
    <property type="evidence" value="ECO:0007669"/>
    <property type="project" value="UniProtKB-UniRule"/>
</dbReference>
<dbReference type="GO" id="GO:0006744">
    <property type="term" value="P:ubiquinone biosynthetic process"/>
    <property type="evidence" value="ECO:0007669"/>
    <property type="project" value="UniProtKB-UniPathway"/>
</dbReference>
<dbReference type="CDD" id="cd13972">
    <property type="entry name" value="UbiB"/>
    <property type="match status" value="1"/>
</dbReference>
<dbReference type="HAMAP" id="MF_00414">
    <property type="entry name" value="UbiB"/>
    <property type="match status" value="1"/>
</dbReference>
<dbReference type="InterPro" id="IPR004147">
    <property type="entry name" value="ABC1_dom"/>
</dbReference>
<dbReference type="InterPro" id="IPR011009">
    <property type="entry name" value="Kinase-like_dom_sf"/>
</dbReference>
<dbReference type="InterPro" id="IPR010232">
    <property type="entry name" value="UbiB"/>
</dbReference>
<dbReference type="InterPro" id="IPR045308">
    <property type="entry name" value="UbiB_bact"/>
</dbReference>
<dbReference type="InterPro" id="IPR050154">
    <property type="entry name" value="UbiB_kinase"/>
</dbReference>
<dbReference type="NCBIfam" id="NF003404">
    <property type="entry name" value="PRK04750.1"/>
    <property type="match status" value="1"/>
</dbReference>
<dbReference type="NCBIfam" id="TIGR01982">
    <property type="entry name" value="UbiB"/>
    <property type="match status" value="1"/>
</dbReference>
<dbReference type="PANTHER" id="PTHR10566">
    <property type="entry name" value="CHAPERONE-ACTIVITY OF BC1 COMPLEX CABC1 -RELATED"/>
    <property type="match status" value="1"/>
</dbReference>
<dbReference type="PANTHER" id="PTHR10566:SF113">
    <property type="entry name" value="PROTEIN ACTIVITY OF BC1 COMPLEX KINASE 7, CHLOROPLASTIC"/>
    <property type="match status" value="1"/>
</dbReference>
<dbReference type="Pfam" id="PF03109">
    <property type="entry name" value="ABC1"/>
    <property type="match status" value="1"/>
</dbReference>
<dbReference type="SUPFAM" id="SSF56112">
    <property type="entry name" value="Protein kinase-like (PK-like)"/>
    <property type="match status" value="1"/>
</dbReference>
<keyword id="KW-0067">ATP-binding</keyword>
<keyword id="KW-0997">Cell inner membrane</keyword>
<keyword id="KW-1003">Cell membrane</keyword>
<keyword id="KW-0418">Kinase</keyword>
<keyword id="KW-0472">Membrane</keyword>
<keyword id="KW-0547">Nucleotide-binding</keyword>
<keyword id="KW-0808">Transferase</keyword>
<keyword id="KW-0812">Transmembrane</keyword>
<keyword id="KW-1133">Transmembrane helix</keyword>
<keyword id="KW-0831">Ubiquinone biosynthesis</keyword>
<reference key="1">
    <citation type="journal article" date="2009" name="Genome Biol.">
        <title>Genomic and genetic analyses of diversity and plant interactions of Pseudomonas fluorescens.</title>
        <authorList>
            <person name="Silby M.W."/>
            <person name="Cerdeno-Tarraga A.M."/>
            <person name="Vernikos G.S."/>
            <person name="Giddens S.R."/>
            <person name="Jackson R.W."/>
            <person name="Preston G.M."/>
            <person name="Zhang X.-X."/>
            <person name="Moon C.D."/>
            <person name="Gehrig S.M."/>
            <person name="Godfrey S.A.C."/>
            <person name="Knight C.G."/>
            <person name="Malone J.G."/>
            <person name="Robinson Z."/>
            <person name="Spiers A.J."/>
            <person name="Harris S."/>
            <person name="Challis G.L."/>
            <person name="Yaxley A.M."/>
            <person name="Harris D."/>
            <person name="Seeger K."/>
            <person name="Murphy L."/>
            <person name="Rutter S."/>
            <person name="Squares R."/>
            <person name="Quail M.A."/>
            <person name="Saunders E."/>
            <person name="Mavromatis K."/>
            <person name="Brettin T.S."/>
            <person name="Bentley S.D."/>
            <person name="Hothersall J."/>
            <person name="Stephens E."/>
            <person name="Thomas C.M."/>
            <person name="Parkhill J."/>
            <person name="Levy S.B."/>
            <person name="Rainey P.B."/>
            <person name="Thomson N.R."/>
        </authorList>
    </citation>
    <scope>NUCLEOTIDE SEQUENCE [LARGE SCALE GENOMIC DNA]</scope>
    <source>
        <strain>Pf0-1</strain>
    </source>
</reference>
<accession>Q3KJC7</accession>
<organism>
    <name type="scientific">Pseudomonas fluorescens (strain Pf0-1)</name>
    <dbReference type="NCBI Taxonomy" id="205922"/>
    <lineage>
        <taxon>Bacteria</taxon>
        <taxon>Pseudomonadati</taxon>
        <taxon>Pseudomonadota</taxon>
        <taxon>Gammaproteobacteria</taxon>
        <taxon>Pseudomonadales</taxon>
        <taxon>Pseudomonadaceae</taxon>
        <taxon>Pseudomonas</taxon>
    </lineage>
</organism>
<evidence type="ECO:0000255" key="1">
    <source>
        <dbReference type="HAMAP-Rule" id="MF_00414"/>
    </source>
</evidence>
<sequence>MKLLAVRRLLRIQRVVIRYRLDDLLFDLPLPWFLLALRYVLPWRWFPRKPLELSRGARLRLALQDLGPIFIKFGQILSTRRDLLPEDIADELMRLQDRVPPFDSQLSVKLIEEQLGKKISEVFSRFDVEPLASASVAQVHAAQLKTGEEVVVKVIRPGLKPIIAQDLAWLFILARAAEKVSADARLLHPVDVVSDYEKTIYDELDLLREAANASQLKRNFEGSPLLYVPQVYWDWCRPKVLVMERIYGIQVTDLATLADQRTDMKMLAERGVEIFFTQVFRDSFFHADMHPGNIFVSTVNPWSPQYIAIDCGIVGSLTPEDQDYLARNLFAFFKRDYRRVAQLHIDSGWVPAETKLNEFEAAIRTVCEPIFEKPLKDISFGQVLMRLFQTARRFNMEVQPQLVLLQKTLLNIEGLGRQLYPDLDLWNTAQPFLERWMRERVSPKALLGNVQSQFEQLPHLANMARDLLERMSQPHANDPPPPWKKRKDDWFLRLLGSAHLAGGTILAAGGPLHELGHWPAGIMVAVGLYLVVRR</sequence>
<feature type="chain" id="PRO_1000050051" description="Probable protein kinase UbiB">
    <location>
        <begin position="1"/>
        <end position="534"/>
    </location>
</feature>
<feature type="transmembrane region" description="Helical" evidence="1">
    <location>
        <begin position="23"/>
        <end position="43"/>
    </location>
</feature>
<feature type="transmembrane region" description="Helical" evidence="1">
    <location>
        <begin position="490"/>
        <end position="510"/>
    </location>
</feature>
<feature type="transmembrane region" description="Helical" evidence="1">
    <location>
        <begin position="512"/>
        <end position="532"/>
    </location>
</feature>
<feature type="domain" description="Protein kinase" evidence="1">
    <location>
        <begin position="125"/>
        <end position="492"/>
    </location>
</feature>
<feature type="active site" description="Proton acceptor" evidence="1">
    <location>
        <position position="288"/>
    </location>
</feature>
<feature type="binding site" evidence="1">
    <location>
        <begin position="131"/>
        <end position="139"/>
    </location>
    <ligand>
        <name>ATP</name>
        <dbReference type="ChEBI" id="CHEBI:30616"/>
    </ligand>
</feature>
<feature type="binding site" evidence="1">
    <location>
        <position position="153"/>
    </location>
    <ligand>
        <name>ATP</name>
        <dbReference type="ChEBI" id="CHEBI:30616"/>
    </ligand>
</feature>
<proteinExistence type="inferred from homology"/>
<name>UBIB_PSEPF</name>
<comment type="function">
    <text evidence="1">Is probably a protein kinase regulator of UbiI activity which is involved in aerobic coenzyme Q (ubiquinone) biosynthesis.</text>
</comment>
<comment type="pathway">
    <text>Cofactor biosynthesis; ubiquinone biosynthesis [regulation].</text>
</comment>
<comment type="subcellular location">
    <subcellularLocation>
        <location evidence="1">Cell inner membrane</location>
        <topology evidence="1">Multi-pass membrane protein</topology>
    </subcellularLocation>
</comment>
<comment type="similarity">
    <text evidence="1">Belongs to the ABC1 family. UbiB subfamily.</text>
</comment>